<protein>
    <recommendedName>
        <fullName evidence="1">Small ribosomal subunit protein uS9</fullName>
    </recommendedName>
    <alternativeName>
        <fullName evidence="3">30S ribosomal protein S9</fullName>
    </alternativeName>
</protein>
<dbReference type="EMBL" id="CP001034">
    <property type="protein sequence ID" value="ACB83829.1"/>
    <property type="molecule type" value="Genomic_DNA"/>
</dbReference>
<dbReference type="SMR" id="B2A4Q7"/>
<dbReference type="FunCoup" id="B2A4Q7">
    <property type="interactions" value="478"/>
</dbReference>
<dbReference type="STRING" id="457570.Nther_0230"/>
<dbReference type="KEGG" id="nth:Nther_0230"/>
<dbReference type="eggNOG" id="COG0103">
    <property type="taxonomic scope" value="Bacteria"/>
</dbReference>
<dbReference type="HOGENOM" id="CLU_046483_2_1_9"/>
<dbReference type="InParanoid" id="B2A4Q7"/>
<dbReference type="Proteomes" id="UP000001683">
    <property type="component" value="Chromosome"/>
</dbReference>
<dbReference type="GO" id="GO:0022627">
    <property type="term" value="C:cytosolic small ribosomal subunit"/>
    <property type="evidence" value="ECO:0007669"/>
    <property type="project" value="TreeGrafter"/>
</dbReference>
<dbReference type="GO" id="GO:0003723">
    <property type="term" value="F:RNA binding"/>
    <property type="evidence" value="ECO:0007669"/>
    <property type="project" value="TreeGrafter"/>
</dbReference>
<dbReference type="GO" id="GO:0003735">
    <property type="term" value="F:structural constituent of ribosome"/>
    <property type="evidence" value="ECO:0007669"/>
    <property type="project" value="InterPro"/>
</dbReference>
<dbReference type="GO" id="GO:0006412">
    <property type="term" value="P:translation"/>
    <property type="evidence" value="ECO:0007669"/>
    <property type="project" value="UniProtKB-UniRule"/>
</dbReference>
<dbReference type="FunFam" id="3.30.230.10:FF:000001">
    <property type="entry name" value="30S ribosomal protein S9"/>
    <property type="match status" value="1"/>
</dbReference>
<dbReference type="Gene3D" id="3.30.230.10">
    <property type="match status" value="1"/>
</dbReference>
<dbReference type="HAMAP" id="MF_00532_B">
    <property type="entry name" value="Ribosomal_uS9_B"/>
    <property type="match status" value="1"/>
</dbReference>
<dbReference type="InterPro" id="IPR020568">
    <property type="entry name" value="Ribosomal_Su5_D2-typ_SF"/>
</dbReference>
<dbReference type="InterPro" id="IPR000754">
    <property type="entry name" value="Ribosomal_uS9"/>
</dbReference>
<dbReference type="InterPro" id="IPR023035">
    <property type="entry name" value="Ribosomal_uS9_bac/plastid"/>
</dbReference>
<dbReference type="InterPro" id="IPR020574">
    <property type="entry name" value="Ribosomal_uS9_CS"/>
</dbReference>
<dbReference type="InterPro" id="IPR014721">
    <property type="entry name" value="Ribsml_uS5_D2-typ_fold_subgr"/>
</dbReference>
<dbReference type="NCBIfam" id="NF001099">
    <property type="entry name" value="PRK00132.1"/>
    <property type="match status" value="1"/>
</dbReference>
<dbReference type="PANTHER" id="PTHR21569">
    <property type="entry name" value="RIBOSOMAL PROTEIN S9"/>
    <property type="match status" value="1"/>
</dbReference>
<dbReference type="PANTHER" id="PTHR21569:SF1">
    <property type="entry name" value="SMALL RIBOSOMAL SUBUNIT PROTEIN US9M"/>
    <property type="match status" value="1"/>
</dbReference>
<dbReference type="Pfam" id="PF00380">
    <property type="entry name" value="Ribosomal_S9"/>
    <property type="match status" value="1"/>
</dbReference>
<dbReference type="SUPFAM" id="SSF54211">
    <property type="entry name" value="Ribosomal protein S5 domain 2-like"/>
    <property type="match status" value="1"/>
</dbReference>
<dbReference type="PROSITE" id="PS00360">
    <property type="entry name" value="RIBOSOMAL_S9"/>
    <property type="match status" value="1"/>
</dbReference>
<proteinExistence type="inferred from homology"/>
<keyword id="KW-1185">Reference proteome</keyword>
<keyword id="KW-0687">Ribonucleoprotein</keyword>
<keyword id="KW-0689">Ribosomal protein</keyword>
<reference key="1">
    <citation type="submission" date="2008-04" db="EMBL/GenBank/DDBJ databases">
        <title>Complete sequence of chromosome of Natranaerobius thermophilus JW/NM-WN-LF.</title>
        <authorList>
            <consortium name="US DOE Joint Genome Institute"/>
            <person name="Copeland A."/>
            <person name="Lucas S."/>
            <person name="Lapidus A."/>
            <person name="Glavina del Rio T."/>
            <person name="Dalin E."/>
            <person name="Tice H."/>
            <person name="Bruce D."/>
            <person name="Goodwin L."/>
            <person name="Pitluck S."/>
            <person name="Chertkov O."/>
            <person name="Brettin T."/>
            <person name="Detter J.C."/>
            <person name="Han C."/>
            <person name="Kuske C.R."/>
            <person name="Schmutz J."/>
            <person name="Larimer F."/>
            <person name="Land M."/>
            <person name="Hauser L."/>
            <person name="Kyrpides N."/>
            <person name="Lykidis A."/>
            <person name="Mesbah N.M."/>
            <person name="Wiegel J."/>
        </authorList>
    </citation>
    <scope>NUCLEOTIDE SEQUENCE [LARGE SCALE GENOMIC DNA]</scope>
    <source>
        <strain>ATCC BAA-1301 / DSM 18059 / JW/NM-WN-LF</strain>
    </source>
</reference>
<name>RS9_NATTJ</name>
<accession>B2A4Q7</accession>
<comment type="similarity">
    <text evidence="1">Belongs to the universal ribosomal protein uS9 family.</text>
</comment>
<sequence length="132" mass="14848">MAVAKVQYFGTGRRKTSVARVRLVPGNGKIVVNNKAMDDYFGLETLKAIIKQPLQTVEMEDKFDVLVNVRGGGHSGQAEAIRHGIARALVKADGELRPVLKKEGYLTRDPRMKERKKYGLRKARRAPQFSKR</sequence>
<organism>
    <name type="scientific">Natranaerobius thermophilus (strain ATCC BAA-1301 / DSM 18059 / JW/NM-WN-LF)</name>
    <dbReference type="NCBI Taxonomy" id="457570"/>
    <lineage>
        <taxon>Bacteria</taxon>
        <taxon>Bacillati</taxon>
        <taxon>Bacillota</taxon>
        <taxon>Clostridia</taxon>
        <taxon>Natranaerobiales</taxon>
        <taxon>Natranaerobiaceae</taxon>
        <taxon>Natranaerobius</taxon>
    </lineage>
</organism>
<gene>
    <name evidence="1" type="primary">rpsI</name>
    <name type="ordered locus">Nther_0230</name>
</gene>
<feature type="chain" id="PRO_1000128144" description="Small ribosomal subunit protein uS9">
    <location>
        <begin position="1"/>
        <end position="132"/>
    </location>
</feature>
<feature type="region of interest" description="Disordered" evidence="2">
    <location>
        <begin position="104"/>
        <end position="132"/>
    </location>
</feature>
<feature type="compositionally biased region" description="Basic residues" evidence="2">
    <location>
        <begin position="113"/>
        <end position="132"/>
    </location>
</feature>
<evidence type="ECO:0000255" key="1">
    <source>
        <dbReference type="HAMAP-Rule" id="MF_00532"/>
    </source>
</evidence>
<evidence type="ECO:0000256" key="2">
    <source>
        <dbReference type="SAM" id="MobiDB-lite"/>
    </source>
</evidence>
<evidence type="ECO:0000305" key="3"/>